<dbReference type="EMBL" id="AL591979">
    <property type="protein sequence ID" value="CAC99581.1"/>
    <property type="molecule type" value="Genomic_DNA"/>
</dbReference>
<dbReference type="PIR" id="AG1262">
    <property type="entry name" value="AG1262"/>
</dbReference>
<dbReference type="RefSeq" id="NP_465028.1">
    <property type="nucleotide sequence ID" value="NC_003210.1"/>
</dbReference>
<dbReference type="PDB" id="6TIF">
    <property type="method" value="X-ray"/>
    <property type="resolution" value="1.60 A"/>
    <property type="chains" value="AAA/BBB=1-90"/>
</dbReference>
<dbReference type="PDBsum" id="6TIF"/>
<dbReference type="SMR" id="P60357"/>
<dbReference type="STRING" id="169963.gene:17594160"/>
<dbReference type="PaxDb" id="169963-lmo1503"/>
<dbReference type="EnsemblBacteria" id="CAC99581">
    <property type="protein sequence ID" value="CAC99581"/>
    <property type="gene ID" value="CAC99581"/>
</dbReference>
<dbReference type="GeneID" id="987746"/>
<dbReference type="KEGG" id="lmo:lmo1503"/>
<dbReference type="PATRIC" id="fig|169963.11.peg.1544"/>
<dbReference type="eggNOG" id="COG4472">
    <property type="taxonomic scope" value="Bacteria"/>
</dbReference>
<dbReference type="HOGENOM" id="CLU_162466_0_0_9"/>
<dbReference type="OrthoDB" id="9796303at2"/>
<dbReference type="PhylomeDB" id="P60357"/>
<dbReference type="BioCyc" id="LMON169963:LMO1503-MONOMER"/>
<dbReference type="Proteomes" id="UP000000817">
    <property type="component" value="Chromosome"/>
</dbReference>
<dbReference type="HAMAP" id="MF_01507">
    <property type="entry name" value="UPF0297"/>
    <property type="match status" value="1"/>
</dbReference>
<dbReference type="InterPro" id="IPR009309">
    <property type="entry name" value="IreB"/>
</dbReference>
<dbReference type="NCBIfam" id="NF003997">
    <property type="entry name" value="PRK05473.1"/>
    <property type="match status" value="1"/>
</dbReference>
<dbReference type="PANTHER" id="PTHR40067">
    <property type="entry name" value="UPF0297 PROTEIN YRZL"/>
    <property type="match status" value="1"/>
</dbReference>
<dbReference type="PANTHER" id="PTHR40067:SF1">
    <property type="entry name" value="UPF0297 PROTEIN YRZL"/>
    <property type="match status" value="1"/>
</dbReference>
<dbReference type="Pfam" id="PF06135">
    <property type="entry name" value="IreB"/>
    <property type="match status" value="1"/>
</dbReference>
<dbReference type="PIRSF" id="PIRSF037258">
    <property type="entry name" value="DUF965_bac"/>
    <property type="match status" value="1"/>
</dbReference>
<evidence type="ECO:0000255" key="1">
    <source>
        <dbReference type="HAMAP-Rule" id="MF_01507"/>
    </source>
</evidence>
<evidence type="ECO:0007829" key="2">
    <source>
        <dbReference type="PDB" id="6TIF"/>
    </source>
</evidence>
<organism>
    <name type="scientific">Listeria monocytogenes serovar 1/2a (strain ATCC BAA-679 / EGD-e)</name>
    <dbReference type="NCBI Taxonomy" id="169963"/>
    <lineage>
        <taxon>Bacteria</taxon>
        <taxon>Bacillati</taxon>
        <taxon>Bacillota</taxon>
        <taxon>Bacilli</taxon>
        <taxon>Bacillales</taxon>
        <taxon>Listeriaceae</taxon>
        <taxon>Listeria</taxon>
    </lineage>
</organism>
<reference key="1">
    <citation type="journal article" date="2001" name="Science">
        <title>Comparative genomics of Listeria species.</title>
        <authorList>
            <person name="Glaser P."/>
            <person name="Frangeul L."/>
            <person name="Buchrieser C."/>
            <person name="Rusniok C."/>
            <person name="Amend A."/>
            <person name="Baquero F."/>
            <person name="Berche P."/>
            <person name="Bloecker H."/>
            <person name="Brandt P."/>
            <person name="Chakraborty T."/>
            <person name="Charbit A."/>
            <person name="Chetouani F."/>
            <person name="Couve E."/>
            <person name="de Daruvar A."/>
            <person name="Dehoux P."/>
            <person name="Domann E."/>
            <person name="Dominguez-Bernal G."/>
            <person name="Duchaud E."/>
            <person name="Durant L."/>
            <person name="Dussurget O."/>
            <person name="Entian K.-D."/>
            <person name="Fsihi H."/>
            <person name="Garcia-del Portillo F."/>
            <person name="Garrido P."/>
            <person name="Gautier L."/>
            <person name="Goebel W."/>
            <person name="Gomez-Lopez N."/>
            <person name="Hain T."/>
            <person name="Hauf J."/>
            <person name="Jackson D."/>
            <person name="Jones L.-M."/>
            <person name="Kaerst U."/>
            <person name="Kreft J."/>
            <person name="Kuhn M."/>
            <person name="Kunst F."/>
            <person name="Kurapkat G."/>
            <person name="Madueno E."/>
            <person name="Maitournam A."/>
            <person name="Mata Vicente J."/>
            <person name="Ng E."/>
            <person name="Nedjari H."/>
            <person name="Nordsiek G."/>
            <person name="Novella S."/>
            <person name="de Pablos B."/>
            <person name="Perez-Diaz J.-C."/>
            <person name="Purcell R."/>
            <person name="Remmel B."/>
            <person name="Rose M."/>
            <person name="Schlueter T."/>
            <person name="Simoes N."/>
            <person name="Tierrez A."/>
            <person name="Vazquez-Boland J.-A."/>
            <person name="Voss H."/>
            <person name="Wehland J."/>
            <person name="Cossart P."/>
        </authorList>
    </citation>
    <scope>NUCLEOTIDE SEQUENCE [LARGE SCALE GENOMIC DNA]</scope>
    <source>
        <strain>ATCC BAA-679 / EGD-e</strain>
    </source>
</reference>
<keyword id="KW-0002">3D-structure</keyword>
<keyword id="KW-1185">Reference proteome</keyword>
<sequence>MDSKDQTMFYNFGDDSIEEDVKKLMKQVYVALEEKGYNPVNQIVGYLLSGDPAYIPRHKDARSMIRRLERDEIIEELVKAYLKNNEIGEK</sequence>
<protein>
    <recommendedName>
        <fullName evidence="1">UPF0297 protein lmo1503</fullName>
    </recommendedName>
</protein>
<accession>P60357</accession>
<accession>Q92BL0</accession>
<gene>
    <name type="ordered locus">lmo1503</name>
</gene>
<comment type="similarity">
    <text evidence="1">Belongs to the UPF0297 family.</text>
</comment>
<feature type="chain" id="PRO_0000216974" description="UPF0297 protein lmo1503">
    <location>
        <begin position="1"/>
        <end position="90"/>
    </location>
</feature>
<feature type="helix" evidence="2">
    <location>
        <begin position="17"/>
        <end position="34"/>
    </location>
</feature>
<feature type="helix" evidence="2">
    <location>
        <begin position="39"/>
        <end position="49"/>
    </location>
</feature>
<feature type="helix" evidence="2">
    <location>
        <begin position="52"/>
        <end position="54"/>
    </location>
</feature>
<feature type="helix" evidence="2">
    <location>
        <begin position="61"/>
        <end position="67"/>
    </location>
</feature>
<feature type="helix" evidence="2">
    <location>
        <begin position="70"/>
        <end position="84"/>
    </location>
</feature>
<name>Y1503_LISMO</name>
<proteinExistence type="evidence at protein level"/>